<protein>
    <recommendedName>
        <fullName evidence="1">C-phycocyanin beta subunit</fullName>
    </recommendedName>
</protein>
<feature type="chain" id="PRO_0000371458" description="C-phycocyanin beta subunit">
    <location>
        <begin position="1" status="less than"/>
        <end position="129" status="greater than"/>
    </location>
</feature>
<feature type="binding site" description="covalent" evidence="1">
    <location>
        <position position="116"/>
    </location>
    <ligand>
        <name>(2R,3E)-phycocyanobilin</name>
        <dbReference type="ChEBI" id="CHEBI:85275"/>
        <label>2</label>
    </ligand>
</feature>
<feature type="modified residue" description="N4-methylasparagine" evidence="1">
    <location>
        <position position="62"/>
    </location>
</feature>
<feature type="non-consecutive residues" evidence="5">
    <location>
        <begin position="25"/>
        <end position="26"/>
    </location>
</feature>
<feature type="non-consecutive residues" evidence="5">
    <location>
        <begin position="68"/>
        <end position="69"/>
    </location>
</feature>
<feature type="non-consecutive residues" evidence="5">
    <location>
        <begin position="93"/>
        <end position="94"/>
    </location>
</feature>
<feature type="non-consecutive residues" evidence="5">
    <location>
        <begin position="113"/>
        <end position="114"/>
    </location>
</feature>
<feature type="non-terminal residue" evidence="5">
    <location>
        <position position="1"/>
    </location>
</feature>
<feature type="non-terminal residue" evidence="5">
    <location>
        <position position="129"/>
    </location>
</feature>
<comment type="function">
    <text>Light-harvesting photosynthetic bile pigment-protein from the phycobiliprotein complex (phycobilisome, PBS). Phycocyanin is the major phycobiliprotein in the PBS rod.</text>
</comment>
<comment type="subunit">
    <text evidence="2">Heterodimer of an alpha and a beta subunit, which further assembles into trimers and the trimers into hexamers.</text>
</comment>
<comment type="subcellular location">
    <subcellularLocation>
        <location evidence="1">Cellular thylakoid membrane</location>
        <topology evidence="1">Peripheral membrane protein</topology>
        <orientation evidence="1">Cytoplasmic side</orientation>
    </subcellularLocation>
    <text evidence="1">Part of the phycobilisome rod.</text>
</comment>
<comment type="PTM">
    <text evidence="4">Two isomers exist.</text>
</comment>
<comment type="PTM">
    <text evidence="2">Contains two covalently linked bilin chromophores.</text>
</comment>
<comment type="mass spectrometry">
    <text>Major isomer.</text>
</comment>
<comment type="mass spectrometry">
    <text>Minor isomer.</text>
</comment>
<comment type="mass spectrometry">
    <text>Major isomer.</text>
</comment>
<comment type="mass spectrometry">
    <text>Minor isomer.</text>
</comment>
<comment type="similarity">
    <text evidence="3">Belongs to the phycobiliprotein family.</text>
</comment>
<keyword id="KW-0042">Antenna complex</keyword>
<keyword id="KW-0089">Bile pigment</keyword>
<keyword id="KW-0157">Chromophore</keyword>
<keyword id="KW-0903">Direct protein sequencing</keyword>
<keyword id="KW-0249">Electron transport</keyword>
<keyword id="KW-0472">Membrane</keyword>
<keyword id="KW-0488">Methylation</keyword>
<keyword id="KW-0602">Photosynthesis</keyword>
<keyword id="KW-0605">Phycobilisome</keyword>
<keyword id="KW-0793">Thylakoid</keyword>
<keyword id="KW-0813">Transport</keyword>
<sequence>VVSQADARGEFLSTEQLDALTAVVARRLDVVNRITSNASAIVTNAARSLFEEQPNLIAPGGNAYTNRRRDMEIILRYVTYAAIAGDASVLDDRRETYQALGTPGASVAVGVGKGDCSSLVSEVASYFDR</sequence>
<organism>
    <name type="scientific">Aphanizomenon flos-aquae</name>
    <dbReference type="NCBI Taxonomy" id="1176"/>
    <lineage>
        <taxon>Bacteria</taxon>
        <taxon>Bacillati</taxon>
        <taxon>Cyanobacteriota</taxon>
        <taxon>Cyanophyceae</taxon>
        <taxon>Nostocales</taxon>
        <taxon>Aphanizomenonaceae</taxon>
        <taxon>Aphanizomenon</taxon>
    </lineage>
</organism>
<evidence type="ECO:0000250" key="1">
    <source>
        <dbReference type="UniProtKB" id="P00310"/>
    </source>
</evidence>
<evidence type="ECO:0000250" key="2">
    <source>
        <dbReference type="UniProtKB" id="P06539"/>
    </source>
</evidence>
<evidence type="ECO:0000255" key="3"/>
<evidence type="ECO:0000269" key="4">
    <source>
    </source>
</evidence>
<evidence type="ECO:0000303" key="5">
    <source>
    </source>
</evidence>
<evidence type="ECO:0000305" key="6"/>
<accession>P85869</accession>
<gene>
    <name evidence="1" type="primary">cpcB</name>
</gene>
<dbReference type="SMR" id="P85869"/>
<dbReference type="GO" id="GO:0030089">
    <property type="term" value="C:phycobilisome"/>
    <property type="evidence" value="ECO:0007669"/>
    <property type="project" value="UniProtKB-KW"/>
</dbReference>
<dbReference type="GO" id="GO:0031676">
    <property type="term" value="C:plasma membrane-derived thylakoid membrane"/>
    <property type="evidence" value="ECO:0007669"/>
    <property type="project" value="UniProtKB-SubCell"/>
</dbReference>
<dbReference type="GO" id="GO:0015979">
    <property type="term" value="P:photosynthesis"/>
    <property type="evidence" value="ECO:0007669"/>
    <property type="project" value="UniProtKB-KW"/>
</dbReference>
<dbReference type="Gene3D" id="1.10.490.20">
    <property type="entry name" value="Phycocyanins"/>
    <property type="match status" value="1"/>
</dbReference>
<dbReference type="InterPro" id="IPR009050">
    <property type="entry name" value="Globin-like_sf"/>
</dbReference>
<dbReference type="InterPro" id="IPR012128">
    <property type="entry name" value="Phycobilisome_asu/bsu"/>
</dbReference>
<dbReference type="InterPro" id="IPR038719">
    <property type="entry name" value="Phycobilisome_asu/bsu_sf"/>
</dbReference>
<dbReference type="PANTHER" id="PTHR34011:SF7">
    <property type="entry name" value="C-PHYCOCYANIN BETA SUBUNIT"/>
    <property type="match status" value="1"/>
</dbReference>
<dbReference type="PANTHER" id="PTHR34011">
    <property type="entry name" value="PHYCOBILISOME 32.1 KDA LINKER POLYPEPTIDE, PHYCOCYANIN-ASSOCIATED, ROD 2-RELATED"/>
    <property type="match status" value="1"/>
</dbReference>
<dbReference type="Pfam" id="PF00502">
    <property type="entry name" value="Phycobilisome"/>
    <property type="match status" value="1"/>
</dbReference>
<dbReference type="PIRSF" id="PIRSF000081">
    <property type="entry name" value="Phycocyanin"/>
    <property type="match status" value="1"/>
</dbReference>
<dbReference type="SUPFAM" id="SSF46458">
    <property type="entry name" value="Globin-like"/>
    <property type="match status" value="1"/>
</dbReference>
<reference evidence="6" key="1">
    <citation type="journal article" date="2009" name="J. Mass Spectrom.">
        <title>De novo sequence analysis and intact mass measurements for characterization of phycocyanin subunit isoforms from the blue-green alga Aphanizomenon flos-aquae.</title>
        <authorList>
            <person name="Rinalducci S."/>
            <person name="Roepstorff P."/>
            <person name="Zolla L."/>
        </authorList>
    </citation>
    <scope>PROTEIN SEQUENCE</scope>
    <scope>MASS SPECTROMETRY</scope>
</reference>
<proteinExistence type="evidence at protein level"/>
<name>PHCB_APHFL</name>